<sequence>MSVVKEFREFIARGNVIDLAVGVIIGAAFNGIVKSLVDQVIMPPIGLLTGGLDFSKLEWVLRPEDPASEAIEKVAIQYGAFVNTVIQFFIVATVVFLLVKLVNEIRRQDAAEPAPAAPPAPTAEETLLTEIRDLLAKKG</sequence>
<protein>
    <recommendedName>
        <fullName evidence="1">Large-conductance mechanosensitive channel</fullName>
    </recommendedName>
</protein>
<comment type="function">
    <text evidence="1">Channel that opens in response to stretch forces in the membrane lipid bilayer. May participate in the regulation of osmotic pressure changes within the cell.</text>
</comment>
<comment type="subunit">
    <text evidence="1">Homopentamer.</text>
</comment>
<comment type="subcellular location">
    <subcellularLocation>
        <location evidence="1">Cell inner membrane</location>
        <topology evidence="1">Multi-pass membrane protein</topology>
    </subcellularLocation>
</comment>
<comment type="similarity">
    <text evidence="1">Belongs to the MscL family.</text>
</comment>
<reference key="1">
    <citation type="journal article" date="2010" name="J. Bacteriol.">
        <title>The genetic basis of laboratory adaptation in Caulobacter crescentus.</title>
        <authorList>
            <person name="Marks M.E."/>
            <person name="Castro-Rojas C.M."/>
            <person name="Teiling C."/>
            <person name="Du L."/>
            <person name="Kapatral V."/>
            <person name="Walunas T.L."/>
            <person name="Crosson S."/>
        </authorList>
    </citation>
    <scope>NUCLEOTIDE SEQUENCE [LARGE SCALE GENOMIC DNA]</scope>
    <source>
        <strain>NA1000 / CB15N</strain>
    </source>
</reference>
<name>MSCL_CAUVN</name>
<keyword id="KW-0997">Cell inner membrane</keyword>
<keyword id="KW-1003">Cell membrane</keyword>
<keyword id="KW-0407">Ion channel</keyword>
<keyword id="KW-0406">Ion transport</keyword>
<keyword id="KW-0472">Membrane</keyword>
<keyword id="KW-1185">Reference proteome</keyword>
<keyword id="KW-0812">Transmembrane</keyword>
<keyword id="KW-1133">Transmembrane helix</keyword>
<keyword id="KW-0813">Transport</keyword>
<organism>
    <name type="scientific">Caulobacter vibrioides (strain NA1000 / CB15N)</name>
    <name type="common">Caulobacter crescentus</name>
    <dbReference type="NCBI Taxonomy" id="565050"/>
    <lineage>
        <taxon>Bacteria</taxon>
        <taxon>Pseudomonadati</taxon>
        <taxon>Pseudomonadota</taxon>
        <taxon>Alphaproteobacteria</taxon>
        <taxon>Caulobacterales</taxon>
        <taxon>Caulobacteraceae</taxon>
        <taxon>Caulobacter</taxon>
    </lineage>
</organism>
<feature type="chain" id="PRO_1000191358" description="Large-conductance mechanosensitive channel">
    <location>
        <begin position="1"/>
        <end position="139"/>
    </location>
</feature>
<feature type="transmembrane region" description="Helical" evidence="1">
    <location>
        <begin position="16"/>
        <end position="36"/>
    </location>
</feature>
<feature type="transmembrane region" description="Helical" evidence="1">
    <location>
        <begin position="79"/>
        <end position="99"/>
    </location>
</feature>
<gene>
    <name evidence="1" type="primary">mscL</name>
    <name type="ordered locus">CCNA_03700</name>
</gene>
<proteinExistence type="inferred from homology"/>
<accession>B8H6A4</accession>
<dbReference type="EMBL" id="CP001340">
    <property type="protein sequence ID" value="ACL97165.1"/>
    <property type="molecule type" value="Genomic_DNA"/>
</dbReference>
<dbReference type="RefSeq" id="WP_010921414.1">
    <property type="nucleotide sequence ID" value="NC_011916.1"/>
</dbReference>
<dbReference type="RefSeq" id="YP_002519073.1">
    <property type="nucleotide sequence ID" value="NC_011916.1"/>
</dbReference>
<dbReference type="SMR" id="B8H6A4"/>
<dbReference type="GeneID" id="7331894"/>
<dbReference type="KEGG" id="ccs:CCNA_03700"/>
<dbReference type="PATRIC" id="fig|565050.3.peg.3607"/>
<dbReference type="HOGENOM" id="CLU_095787_0_0_5"/>
<dbReference type="OrthoDB" id="9810350at2"/>
<dbReference type="PhylomeDB" id="B8H6A4"/>
<dbReference type="Proteomes" id="UP000001364">
    <property type="component" value="Chromosome"/>
</dbReference>
<dbReference type="GO" id="GO:0005886">
    <property type="term" value="C:plasma membrane"/>
    <property type="evidence" value="ECO:0007669"/>
    <property type="project" value="UniProtKB-SubCell"/>
</dbReference>
<dbReference type="GO" id="GO:0008381">
    <property type="term" value="F:mechanosensitive monoatomic ion channel activity"/>
    <property type="evidence" value="ECO:0007669"/>
    <property type="project" value="UniProtKB-UniRule"/>
</dbReference>
<dbReference type="FunFam" id="1.10.1200.120:FF:000001">
    <property type="entry name" value="Large-conductance mechanosensitive channel"/>
    <property type="match status" value="1"/>
</dbReference>
<dbReference type="Gene3D" id="1.10.1200.120">
    <property type="entry name" value="Large-conductance mechanosensitive channel, MscL, domain 1"/>
    <property type="match status" value="1"/>
</dbReference>
<dbReference type="HAMAP" id="MF_00115">
    <property type="entry name" value="MscL"/>
    <property type="match status" value="1"/>
</dbReference>
<dbReference type="InterPro" id="IPR019823">
    <property type="entry name" value="Mechanosensitive_channel_CS"/>
</dbReference>
<dbReference type="InterPro" id="IPR001185">
    <property type="entry name" value="MS_channel"/>
</dbReference>
<dbReference type="InterPro" id="IPR037673">
    <property type="entry name" value="MSC/AndL"/>
</dbReference>
<dbReference type="InterPro" id="IPR036019">
    <property type="entry name" value="MscL_channel"/>
</dbReference>
<dbReference type="NCBIfam" id="TIGR00220">
    <property type="entry name" value="mscL"/>
    <property type="match status" value="1"/>
</dbReference>
<dbReference type="NCBIfam" id="NF001843">
    <property type="entry name" value="PRK00567.1-4"/>
    <property type="match status" value="1"/>
</dbReference>
<dbReference type="PANTHER" id="PTHR30266:SF2">
    <property type="entry name" value="LARGE-CONDUCTANCE MECHANOSENSITIVE CHANNEL"/>
    <property type="match status" value="1"/>
</dbReference>
<dbReference type="PANTHER" id="PTHR30266">
    <property type="entry name" value="MECHANOSENSITIVE CHANNEL MSCL"/>
    <property type="match status" value="1"/>
</dbReference>
<dbReference type="Pfam" id="PF01741">
    <property type="entry name" value="MscL"/>
    <property type="match status" value="1"/>
</dbReference>
<dbReference type="PRINTS" id="PR01264">
    <property type="entry name" value="MECHCHANNEL"/>
</dbReference>
<dbReference type="SUPFAM" id="SSF81330">
    <property type="entry name" value="Gated mechanosensitive channel"/>
    <property type="match status" value="1"/>
</dbReference>
<dbReference type="PROSITE" id="PS01327">
    <property type="entry name" value="MSCL"/>
    <property type="match status" value="1"/>
</dbReference>
<evidence type="ECO:0000255" key="1">
    <source>
        <dbReference type="HAMAP-Rule" id="MF_00115"/>
    </source>
</evidence>